<reference key="1">
    <citation type="journal article" date="2007" name="Nat. Biotechnol.">
        <title>Complete genome sequence of the fish pathogen Flavobacterium psychrophilum.</title>
        <authorList>
            <person name="Duchaud E."/>
            <person name="Boussaha M."/>
            <person name="Loux V."/>
            <person name="Bernardet J.-F."/>
            <person name="Michel C."/>
            <person name="Kerouault B."/>
            <person name="Mondot S."/>
            <person name="Nicolas P."/>
            <person name="Bossy R."/>
            <person name="Caron C."/>
            <person name="Bessieres P."/>
            <person name="Gibrat J.-F."/>
            <person name="Claverol S."/>
            <person name="Dumetz F."/>
            <person name="Le Henaff M."/>
            <person name="Benmansour A."/>
        </authorList>
    </citation>
    <scope>NUCLEOTIDE SEQUENCE [LARGE SCALE GENOMIC DNA]</scope>
    <source>
        <strain>ATCC 49511 / DSM 21280 / CIP 103535 / JIP02/86</strain>
    </source>
</reference>
<name>RL6_FLAPJ</name>
<gene>
    <name evidence="1" type="primary">rplF</name>
    <name type="ordered locus">FP1324</name>
</gene>
<comment type="function">
    <text evidence="1">This protein binds to the 23S rRNA, and is important in its secondary structure. It is located near the subunit interface in the base of the L7/L12 stalk, and near the tRNA binding site of the peptidyltransferase center.</text>
</comment>
<comment type="subunit">
    <text evidence="1">Part of the 50S ribosomal subunit.</text>
</comment>
<comment type="similarity">
    <text evidence="1">Belongs to the universal ribosomal protein uL6 family.</text>
</comment>
<dbReference type="EMBL" id="AM398681">
    <property type="protein sequence ID" value="CAL43407.1"/>
    <property type="molecule type" value="Genomic_DNA"/>
</dbReference>
<dbReference type="RefSeq" id="WP_011963455.1">
    <property type="nucleotide sequence ID" value="NC_009613.3"/>
</dbReference>
<dbReference type="RefSeq" id="YP_001296218.1">
    <property type="nucleotide sequence ID" value="NC_009613.3"/>
</dbReference>
<dbReference type="SMR" id="A6GZ84"/>
<dbReference type="STRING" id="402612.FP1324"/>
<dbReference type="EnsemblBacteria" id="CAL43407">
    <property type="protein sequence ID" value="CAL43407"/>
    <property type="gene ID" value="FP1324"/>
</dbReference>
<dbReference type="GeneID" id="66553227"/>
<dbReference type="KEGG" id="fps:FP1324"/>
<dbReference type="PATRIC" id="fig|402612.5.peg.1341"/>
<dbReference type="eggNOG" id="COG0097">
    <property type="taxonomic scope" value="Bacteria"/>
</dbReference>
<dbReference type="HOGENOM" id="CLU_065464_1_2_10"/>
<dbReference type="OrthoDB" id="9805007at2"/>
<dbReference type="Proteomes" id="UP000006394">
    <property type="component" value="Chromosome"/>
</dbReference>
<dbReference type="GO" id="GO:0022625">
    <property type="term" value="C:cytosolic large ribosomal subunit"/>
    <property type="evidence" value="ECO:0007669"/>
    <property type="project" value="TreeGrafter"/>
</dbReference>
<dbReference type="GO" id="GO:0019843">
    <property type="term" value="F:rRNA binding"/>
    <property type="evidence" value="ECO:0007669"/>
    <property type="project" value="UniProtKB-UniRule"/>
</dbReference>
<dbReference type="GO" id="GO:0003735">
    <property type="term" value="F:structural constituent of ribosome"/>
    <property type="evidence" value="ECO:0007669"/>
    <property type="project" value="InterPro"/>
</dbReference>
<dbReference type="GO" id="GO:0002181">
    <property type="term" value="P:cytoplasmic translation"/>
    <property type="evidence" value="ECO:0007669"/>
    <property type="project" value="TreeGrafter"/>
</dbReference>
<dbReference type="FunFam" id="3.90.930.12:FF:000002">
    <property type="entry name" value="50S ribosomal protein L6"/>
    <property type="match status" value="1"/>
</dbReference>
<dbReference type="Gene3D" id="3.90.930.12">
    <property type="entry name" value="Ribosomal protein L6, alpha-beta domain"/>
    <property type="match status" value="2"/>
</dbReference>
<dbReference type="HAMAP" id="MF_01365_B">
    <property type="entry name" value="Ribosomal_uL6_B"/>
    <property type="match status" value="1"/>
</dbReference>
<dbReference type="InterPro" id="IPR000702">
    <property type="entry name" value="Ribosomal_uL6-like"/>
</dbReference>
<dbReference type="InterPro" id="IPR036789">
    <property type="entry name" value="Ribosomal_uL6-like_a/b-dom_sf"/>
</dbReference>
<dbReference type="InterPro" id="IPR020040">
    <property type="entry name" value="Ribosomal_uL6_a/b-dom"/>
</dbReference>
<dbReference type="InterPro" id="IPR019906">
    <property type="entry name" value="Ribosomal_uL6_bac-type"/>
</dbReference>
<dbReference type="InterPro" id="IPR002358">
    <property type="entry name" value="Ribosomal_uL6_CS"/>
</dbReference>
<dbReference type="NCBIfam" id="TIGR03654">
    <property type="entry name" value="L6_bact"/>
    <property type="match status" value="1"/>
</dbReference>
<dbReference type="PANTHER" id="PTHR11655">
    <property type="entry name" value="60S/50S RIBOSOMAL PROTEIN L6/L9"/>
    <property type="match status" value="1"/>
</dbReference>
<dbReference type="PANTHER" id="PTHR11655:SF14">
    <property type="entry name" value="LARGE RIBOSOMAL SUBUNIT PROTEIN UL6M"/>
    <property type="match status" value="1"/>
</dbReference>
<dbReference type="Pfam" id="PF00347">
    <property type="entry name" value="Ribosomal_L6"/>
    <property type="match status" value="2"/>
</dbReference>
<dbReference type="PIRSF" id="PIRSF002162">
    <property type="entry name" value="Ribosomal_L6"/>
    <property type="match status" value="1"/>
</dbReference>
<dbReference type="PRINTS" id="PR00059">
    <property type="entry name" value="RIBOSOMALL6"/>
</dbReference>
<dbReference type="SUPFAM" id="SSF56053">
    <property type="entry name" value="Ribosomal protein L6"/>
    <property type="match status" value="2"/>
</dbReference>
<dbReference type="PROSITE" id="PS00525">
    <property type="entry name" value="RIBOSOMAL_L6_1"/>
    <property type="match status" value="1"/>
</dbReference>
<evidence type="ECO:0000255" key="1">
    <source>
        <dbReference type="HAMAP-Rule" id="MF_01365"/>
    </source>
</evidence>
<evidence type="ECO:0000305" key="2"/>
<accession>A6GZ84</accession>
<organism>
    <name type="scientific">Flavobacterium psychrophilum (strain ATCC 49511 / DSM 21280 / CIP 103535 / JIP02/86)</name>
    <dbReference type="NCBI Taxonomy" id="402612"/>
    <lineage>
        <taxon>Bacteria</taxon>
        <taxon>Pseudomonadati</taxon>
        <taxon>Bacteroidota</taxon>
        <taxon>Flavobacteriia</taxon>
        <taxon>Flavobacteriales</taxon>
        <taxon>Flavobacteriaceae</taxon>
        <taxon>Flavobacterium</taxon>
    </lineage>
</organism>
<feature type="chain" id="PRO_1000055230" description="Large ribosomal subunit protein uL6">
    <location>
        <begin position="1"/>
        <end position="181"/>
    </location>
</feature>
<protein>
    <recommendedName>
        <fullName evidence="1">Large ribosomal subunit protein uL6</fullName>
    </recommendedName>
    <alternativeName>
        <fullName evidence="2">50S ribosomal protein L6</fullName>
    </alternativeName>
</protein>
<sequence length="181" mass="19559">MSRIGKNPIAIPAGVTVEVNNSIVTVKGKLGQLTQNYTNNVTVKVEEGQVIVERAADSKQERAQHGLYRALINNMVAGVSTGFTKELELVGVGYRASNQGQKLDLALGFSHNIVLEIASEVTLETISEKGKNPIVKLTSFDKQLLGQVAAKIRGFRKPEPYKGKGVKFVGEVLRRKAGKSA</sequence>
<keyword id="KW-1185">Reference proteome</keyword>
<keyword id="KW-0687">Ribonucleoprotein</keyword>
<keyword id="KW-0689">Ribosomal protein</keyword>
<keyword id="KW-0694">RNA-binding</keyword>
<keyword id="KW-0699">rRNA-binding</keyword>
<proteinExistence type="inferred from homology"/>